<organism>
    <name type="scientific">Shewanella sp. (strain W3-18-1)</name>
    <dbReference type="NCBI Taxonomy" id="351745"/>
    <lineage>
        <taxon>Bacteria</taxon>
        <taxon>Pseudomonadati</taxon>
        <taxon>Pseudomonadota</taxon>
        <taxon>Gammaproteobacteria</taxon>
        <taxon>Alteromonadales</taxon>
        <taxon>Shewanellaceae</taxon>
        <taxon>Shewanella</taxon>
    </lineage>
</organism>
<reference key="1">
    <citation type="submission" date="2006-12" db="EMBL/GenBank/DDBJ databases">
        <title>Complete sequence of Shewanella sp. W3-18-1.</title>
        <authorList>
            <consortium name="US DOE Joint Genome Institute"/>
            <person name="Copeland A."/>
            <person name="Lucas S."/>
            <person name="Lapidus A."/>
            <person name="Barry K."/>
            <person name="Detter J.C."/>
            <person name="Glavina del Rio T."/>
            <person name="Hammon N."/>
            <person name="Israni S."/>
            <person name="Dalin E."/>
            <person name="Tice H."/>
            <person name="Pitluck S."/>
            <person name="Chain P."/>
            <person name="Malfatti S."/>
            <person name="Shin M."/>
            <person name="Vergez L."/>
            <person name="Schmutz J."/>
            <person name="Larimer F."/>
            <person name="Land M."/>
            <person name="Hauser L."/>
            <person name="Kyrpides N."/>
            <person name="Lykidis A."/>
            <person name="Tiedje J."/>
            <person name="Richardson P."/>
        </authorList>
    </citation>
    <scope>NUCLEOTIDE SEQUENCE [LARGE SCALE GENOMIC DNA]</scope>
    <source>
        <strain>W3-18-1</strain>
    </source>
</reference>
<gene>
    <name evidence="1" type="primary">leuA</name>
    <name type="ordered locus">Sputw3181_0374</name>
</gene>
<name>LEU1_SHESW</name>
<protein>
    <recommendedName>
        <fullName evidence="1">2-isopropylmalate synthase</fullName>
        <ecNumber evidence="1">2.3.3.13</ecNumber>
    </recommendedName>
    <alternativeName>
        <fullName evidence="1">Alpha-IPM synthase</fullName>
    </alternativeName>
    <alternativeName>
        <fullName evidence="1">Alpha-isopropylmalate synthase</fullName>
    </alternativeName>
</protein>
<proteinExistence type="inferred from homology"/>
<feature type="chain" id="PRO_1000149293" description="2-isopropylmalate synthase">
    <location>
        <begin position="1"/>
        <end position="522"/>
    </location>
</feature>
<feature type="domain" description="Pyruvate carboxyltransferase" evidence="1">
    <location>
        <begin position="5"/>
        <end position="267"/>
    </location>
</feature>
<feature type="region of interest" description="Regulatory domain" evidence="1">
    <location>
        <begin position="392"/>
        <end position="522"/>
    </location>
</feature>
<feature type="binding site" evidence="1">
    <location>
        <position position="14"/>
    </location>
    <ligand>
        <name>Mn(2+)</name>
        <dbReference type="ChEBI" id="CHEBI:29035"/>
    </ligand>
</feature>
<feature type="binding site" evidence="1">
    <location>
        <position position="202"/>
    </location>
    <ligand>
        <name>Mn(2+)</name>
        <dbReference type="ChEBI" id="CHEBI:29035"/>
    </ligand>
</feature>
<feature type="binding site" evidence="1">
    <location>
        <position position="204"/>
    </location>
    <ligand>
        <name>Mn(2+)</name>
        <dbReference type="ChEBI" id="CHEBI:29035"/>
    </ligand>
</feature>
<feature type="binding site" evidence="1">
    <location>
        <position position="238"/>
    </location>
    <ligand>
        <name>Mn(2+)</name>
        <dbReference type="ChEBI" id="CHEBI:29035"/>
    </ligand>
</feature>
<sequence length="522" mass="56939">MSNRVIIFDTTLRDGEQALAASLSVKEKLQIAMALERLGVDVMEVGFPVSSPGDFESVQTIARTIKNSRVCALSRALEKDIDAAAQALSVADQFRIHTFISTSTIHVESKLKRSFDQVLEMAVGAVKYARRFTDDVEFSCEDAGRTPIDNLCRMVEAAILAGARTINIPDTVGYTVPSEFGNIIQTLFNRVPNIDQAVISVHCHDDLGLSVANSITAVQHGARQIECTINGIGERAGNCSLEEIAMILATRKGMLGLETGINAKEIHRTSNLVSQLCNMPVQANKAIVGANAFTHSSGIHQDGMLKAQNTYEIMTPESIGLNRNNLNMTSRSGRHVIKHRMEEMGYSEHDYNMDTLYEEFLKLADKKGQVFDYDLEALAFMEAQAEEDNHYQLQQLVVQSDSTEGVATATVRIEVGGEIKTEAATGNGPVDAAYNAIARATDRRIDIISYKLGAKGVGQNALGQVDITAVYHEQNFHGVGLATDVVEASARALVHVMNLTCRADKVADYKQSMQKNRELGGV</sequence>
<accession>A1REY0</accession>
<dbReference type="EC" id="2.3.3.13" evidence="1"/>
<dbReference type="EMBL" id="CP000503">
    <property type="protein sequence ID" value="ABM23225.1"/>
    <property type="molecule type" value="Genomic_DNA"/>
</dbReference>
<dbReference type="RefSeq" id="WP_011787768.1">
    <property type="nucleotide sequence ID" value="NC_008750.1"/>
</dbReference>
<dbReference type="SMR" id="A1REY0"/>
<dbReference type="GeneID" id="67441930"/>
<dbReference type="KEGG" id="shw:Sputw3181_0374"/>
<dbReference type="HOGENOM" id="CLU_022158_0_1_6"/>
<dbReference type="UniPathway" id="UPA00048">
    <property type="reaction ID" value="UER00070"/>
</dbReference>
<dbReference type="Proteomes" id="UP000002597">
    <property type="component" value="Chromosome"/>
</dbReference>
<dbReference type="GO" id="GO:0005829">
    <property type="term" value="C:cytosol"/>
    <property type="evidence" value="ECO:0007669"/>
    <property type="project" value="TreeGrafter"/>
</dbReference>
<dbReference type="GO" id="GO:0003852">
    <property type="term" value="F:2-isopropylmalate synthase activity"/>
    <property type="evidence" value="ECO:0007669"/>
    <property type="project" value="UniProtKB-UniRule"/>
</dbReference>
<dbReference type="GO" id="GO:0003985">
    <property type="term" value="F:acetyl-CoA C-acetyltransferase activity"/>
    <property type="evidence" value="ECO:0007669"/>
    <property type="project" value="UniProtKB-UniRule"/>
</dbReference>
<dbReference type="GO" id="GO:0030145">
    <property type="term" value="F:manganese ion binding"/>
    <property type="evidence" value="ECO:0007669"/>
    <property type="project" value="UniProtKB-UniRule"/>
</dbReference>
<dbReference type="GO" id="GO:0009098">
    <property type="term" value="P:L-leucine biosynthetic process"/>
    <property type="evidence" value="ECO:0007669"/>
    <property type="project" value="UniProtKB-UniRule"/>
</dbReference>
<dbReference type="CDD" id="cd07940">
    <property type="entry name" value="DRE_TIM_IPMS"/>
    <property type="match status" value="1"/>
</dbReference>
<dbReference type="FunFam" id="1.10.238.260:FF:000001">
    <property type="entry name" value="2-isopropylmalate synthase"/>
    <property type="match status" value="1"/>
</dbReference>
<dbReference type="FunFam" id="3.20.20.70:FF:000010">
    <property type="entry name" value="2-isopropylmalate synthase"/>
    <property type="match status" value="1"/>
</dbReference>
<dbReference type="Gene3D" id="1.10.238.260">
    <property type="match status" value="1"/>
</dbReference>
<dbReference type="Gene3D" id="3.30.160.270">
    <property type="match status" value="1"/>
</dbReference>
<dbReference type="Gene3D" id="3.20.20.70">
    <property type="entry name" value="Aldolase class I"/>
    <property type="match status" value="1"/>
</dbReference>
<dbReference type="HAMAP" id="MF_01025">
    <property type="entry name" value="LeuA_type1"/>
    <property type="match status" value="1"/>
</dbReference>
<dbReference type="InterPro" id="IPR050073">
    <property type="entry name" value="2-IPM_HCS-like"/>
</dbReference>
<dbReference type="InterPro" id="IPR013709">
    <property type="entry name" value="2-isopropylmalate_synth_dimer"/>
</dbReference>
<dbReference type="InterPro" id="IPR002034">
    <property type="entry name" value="AIPM/Hcit_synth_CS"/>
</dbReference>
<dbReference type="InterPro" id="IPR013785">
    <property type="entry name" value="Aldolase_TIM"/>
</dbReference>
<dbReference type="InterPro" id="IPR054691">
    <property type="entry name" value="LeuA/HCS_post-cat"/>
</dbReference>
<dbReference type="InterPro" id="IPR036230">
    <property type="entry name" value="LeuA_allosteric_dom_sf"/>
</dbReference>
<dbReference type="InterPro" id="IPR005671">
    <property type="entry name" value="LeuA_bact_synth"/>
</dbReference>
<dbReference type="InterPro" id="IPR000891">
    <property type="entry name" value="PYR_CT"/>
</dbReference>
<dbReference type="NCBIfam" id="TIGR00973">
    <property type="entry name" value="leuA_bact"/>
    <property type="match status" value="1"/>
</dbReference>
<dbReference type="NCBIfam" id="NF002084">
    <property type="entry name" value="PRK00915.1-1"/>
    <property type="match status" value="1"/>
</dbReference>
<dbReference type="NCBIfam" id="NF002086">
    <property type="entry name" value="PRK00915.1-3"/>
    <property type="match status" value="1"/>
</dbReference>
<dbReference type="PANTHER" id="PTHR10277:SF9">
    <property type="entry name" value="2-ISOPROPYLMALATE SYNTHASE 1, CHLOROPLASTIC-RELATED"/>
    <property type="match status" value="1"/>
</dbReference>
<dbReference type="PANTHER" id="PTHR10277">
    <property type="entry name" value="HOMOCITRATE SYNTHASE-RELATED"/>
    <property type="match status" value="1"/>
</dbReference>
<dbReference type="Pfam" id="PF22617">
    <property type="entry name" value="HCS_D2"/>
    <property type="match status" value="1"/>
</dbReference>
<dbReference type="Pfam" id="PF00682">
    <property type="entry name" value="HMGL-like"/>
    <property type="match status" value="1"/>
</dbReference>
<dbReference type="Pfam" id="PF08502">
    <property type="entry name" value="LeuA_dimer"/>
    <property type="match status" value="1"/>
</dbReference>
<dbReference type="SMART" id="SM00917">
    <property type="entry name" value="LeuA_dimer"/>
    <property type="match status" value="1"/>
</dbReference>
<dbReference type="SUPFAM" id="SSF110921">
    <property type="entry name" value="2-isopropylmalate synthase LeuA, allosteric (dimerisation) domain"/>
    <property type="match status" value="1"/>
</dbReference>
<dbReference type="SUPFAM" id="SSF51569">
    <property type="entry name" value="Aldolase"/>
    <property type="match status" value="1"/>
</dbReference>
<dbReference type="PROSITE" id="PS00815">
    <property type="entry name" value="AIPM_HOMOCIT_SYNTH_1"/>
    <property type="match status" value="1"/>
</dbReference>
<dbReference type="PROSITE" id="PS00816">
    <property type="entry name" value="AIPM_HOMOCIT_SYNTH_2"/>
    <property type="match status" value="1"/>
</dbReference>
<dbReference type="PROSITE" id="PS50991">
    <property type="entry name" value="PYR_CT"/>
    <property type="match status" value="1"/>
</dbReference>
<comment type="function">
    <text evidence="1">Catalyzes the condensation of the acetyl group of acetyl-CoA with 3-methyl-2-oxobutanoate (2-ketoisovalerate) to form 3-carboxy-3-hydroxy-4-methylpentanoate (2-isopropylmalate).</text>
</comment>
<comment type="catalytic activity">
    <reaction evidence="1">
        <text>3-methyl-2-oxobutanoate + acetyl-CoA + H2O = (2S)-2-isopropylmalate + CoA + H(+)</text>
        <dbReference type="Rhea" id="RHEA:21524"/>
        <dbReference type="ChEBI" id="CHEBI:1178"/>
        <dbReference type="ChEBI" id="CHEBI:11851"/>
        <dbReference type="ChEBI" id="CHEBI:15377"/>
        <dbReference type="ChEBI" id="CHEBI:15378"/>
        <dbReference type="ChEBI" id="CHEBI:57287"/>
        <dbReference type="ChEBI" id="CHEBI:57288"/>
        <dbReference type="EC" id="2.3.3.13"/>
    </reaction>
</comment>
<comment type="cofactor">
    <cofactor evidence="1">
        <name>Mn(2+)</name>
        <dbReference type="ChEBI" id="CHEBI:29035"/>
    </cofactor>
</comment>
<comment type="pathway">
    <text evidence="1">Amino-acid biosynthesis; L-leucine biosynthesis; L-leucine from 3-methyl-2-oxobutanoate: step 1/4.</text>
</comment>
<comment type="subunit">
    <text evidence="1">Homodimer.</text>
</comment>
<comment type="subcellular location">
    <subcellularLocation>
        <location evidence="1">Cytoplasm</location>
    </subcellularLocation>
</comment>
<comment type="similarity">
    <text evidence="1">Belongs to the alpha-IPM synthase/homocitrate synthase family. LeuA type 1 subfamily.</text>
</comment>
<keyword id="KW-0028">Amino-acid biosynthesis</keyword>
<keyword id="KW-0100">Branched-chain amino acid biosynthesis</keyword>
<keyword id="KW-0963">Cytoplasm</keyword>
<keyword id="KW-0432">Leucine biosynthesis</keyword>
<keyword id="KW-0464">Manganese</keyword>
<keyword id="KW-0479">Metal-binding</keyword>
<keyword id="KW-0808">Transferase</keyword>
<evidence type="ECO:0000255" key="1">
    <source>
        <dbReference type="HAMAP-Rule" id="MF_01025"/>
    </source>
</evidence>